<comment type="function">
    <text evidence="1">NDH-1 shuttles electrons from NADH, via FMN and iron-sulfur (Fe-S) centers, to quinones in the respiratory chain. The immediate electron acceptor for the enzyme in this species is believed to be ubiquinone. Couples the redox reaction to proton translocation (for every two electrons transferred, four hydrogen ions are translocated across the cytoplasmic membrane), and thus conserves the redox energy in a proton gradient.</text>
</comment>
<comment type="catalytic activity">
    <reaction evidence="1">
        <text>a quinone + NADH + 5 H(+)(in) = a quinol + NAD(+) + 4 H(+)(out)</text>
        <dbReference type="Rhea" id="RHEA:57888"/>
        <dbReference type="ChEBI" id="CHEBI:15378"/>
        <dbReference type="ChEBI" id="CHEBI:24646"/>
        <dbReference type="ChEBI" id="CHEBI:57540"/>
        <dbReference type="ChEBI" id="CHEBI:57945"/>
        <dbReference type="ChEBI" id="CHEBI:132124"/>
    </reaction>
</comment>
<comment type="cofactor">
    <cofactor evidence="1">
        <name>[4Fe-4S] cluster</name>
        <dbReference type="ChEBI" id="CHEBI:49883"/>
    </cofactor>
    <text evidence="1">Binds 2 [4Fe-4S] clusters per subunit.</text>
</comment>
<comment type="subunit">
    <text evidence="1">NDH-1 is composed of 14 different subunits. Subunits NuoA, H, J, K, L, M, N constitute the membrane sector of the complex.</text>
</comment>
<comment type="subcellular location">
    <subcellularLocation>
        <location evidence="1">Cell inner membrane</location>
        <topology evidence="1">Peripheral membrane protein</topology>
    </subcellularLocation>
</comment>
<comment type="similarity">
    <text evidence="1">Belongs to the complex I 23 kDa subunit family.</text>
</comment>
<proteinExistence type="inferred from homology"/>
<sequence>MICKKKFLSPIINLFHSIIINCKGMYITLRYMFKPKVTLNYPLEKGPLSTRFRGEHALRKYKNGEERCIACKLCEAICPAQAITIEAQERDDGSRRTVRYDIDMTKCIYCGFCQEACPVDAIVEGPNFEYATETREELMYNKSKLLHNGQVWEEAIDFRIKKNSQFY</sequence>
<name>NUOI_EHRCJ</name>
<protein>
    <recommendedName>
        <fullName evidence="1">NADH-quinone oxidoreductase subunit I</fullName>
        <ecNumber evidence="1">7.1.1.-</ecNumber>
    </recommendedName>
    <alternativeName>
        <fullName evidence="1">NADH dehydrogenase I subunit I</fullName>
    </alternativeName>
    <alternativeName>
        <fullName evidence="1">NDH-1 subunit I</fullName>
    </alternativeName>
</protein>
<reference key="1">
    <citation type="journal article" date="2006" name="J. Bacteriol.">
        <title>The genome of the obligately intracellular bacterium Ehrlichia canis reveals themes of complex membrane structure and immune evasion strategies.</title>
        <authorList>
            <person name="Mavromatis K."/>
            <person name="Doyle C.K."/>
            <person name="Lykidis A."/>
            <person name="Ivanova N."/>
            <person name="Francino M.P."/>
            <person name="Chain P."/>
            <person name="Shin M."/>
            <person name="Malfatti S."/>
            <person name="Larimer F."/>
            <person name="Copeland A."/>
            <person name="Detter J.C."/>
            <person name="Land M."/>
            <person name="Richardson P.M."/>
            <person name="Yu X.J."/>
            <person name="Walker D.H."/>
            <person name="McBride J.W."/>
            <person name="Kyrpides N.C."/>
        </authorList>
    </citation>
    <scope>NUCLEOTIDE SEQUENCE [LARGE SCALE GENOMIC DNA]</scope>
    <source>
        <strain>Jake</strain>
    </source>
</reference>
<gene>
    <name evidence="1" type="primary">nuoI</name>
    <name type="ordered locus">Ecaj_0361</name>
</gene>
<feature type="chain" id="PRO_0000250902" description="NADH-quinone oxidoreductase subunit I">
    <location>
        <begin position="1"/>
        <end position="167"/>
    </location>
</feature>
<feature type="domain" description="4Fe-4S ferredoxin-type 1" evidence="1">
    <location>
        <begin position="59"/>
        <end position="88"/>
    </location>
</feature>
<feature type="domain" description="4Fe-4S ferredoxin-type 2" evidence="1">
    <location>
        <begin position="98"/>
        <end position="127"/>
    </location>
</feature>
<feature type="binding site" evidence="1">
    <location>
        <position position="68"/>
    </location>
    <ligand>
        <name>[4Fe-4S] cluster</name>
        <dbReference type="ChEBI" id="CHEBI:49883"/>
        <label>1</label>
    </ligand>
</feature>
<feature type="binding site" evidence="1">
    <location>
        <position position="71"/>
    </location>
    <ligand>
        <name>[4Fe-4S] cluster</name>
        <dbReference type="ChEBI" id="CHEBI:49883"/>
        <label>1</label>
    </ligand>
</feature>
<feature type="binding site" evidence="1">
    <location>
        <position position="74"/>
    </location>
    <ligand>
        <name>[4Fe-4S] cluster</name>
        <dbReference type="ChEBI" id="CHEBI:49883"/>
        <label>1</label>
    </ligand>
</feature>
<feature type="binding site" evidence="1">
    <location>
        <position position="78"/>
    </location>
    <ligand>
        <name>[4Fe-4S] cluster</name>
        <dbReference type="ChEBI" id="CHEBI:49883"/>
        <label>2</label>
    </ligand>
</feature>
<feature type="binding site" evidence="1">
    <location>
        <position position="107"/>
    </location>
    <ligand>
        <name>[4Fe-4S] cluster</name>
        <dbReference type="ChEBI" id="CHEBI:49883"/>
        <label>2</label>
    </ligand>
</feature>
<feature type="binding site" evidence="1">
    <location>
        <position position="110"/>
    </location>
    <ligand>
        <name>[4Fe-4S] cluster</name>
        <dbReference type="ChEBI" id="CHEBI:49883"/>
        <label>2</label>
    </ligand>
</feature>
<feature type="binding site" evidence="1">
    <location>
        <position position="113"/>
    </location>
    <ligand>
        <name>[4Fe-4S] cluster</name>
        <dbReference type="ChEBI" id="CHEBI:49883"/>
        <label>2</label>
    </ligand>
</feature>
<feature type="binding site" evidence="1">
    <location>
        <position position="117"/>
    </location>
    <ligand>
        <name>[4Fe-4S] cluster</name>
        <dbReference type="ChEBI" id="CHEBI:49883"/>
        <label>1</label>
    </ligand>
</feature>
<keyword id="KW-0004">4Fe-4S</keyword>
<keyword id="KW-0997">Cell inner membrane</keyword>
<keyword id="KW-1003">Cell membrane</keyword>
<keyword id="KW-0408">Iron</keyword>
<keyword id="KW-0411">Iron-sulfur</keyword>
<keyword id="KW-0472">Membrane</keyword>
<keyword id="KW-0479">Metal-binding</keyword>
<keyword id="KW-0520">NAD</keyword>
<keyword id="KW-0874">Quinone</keyword>
<keyword id="KW-0677">Repeat</keyword>
<keyword id="KW-1278">Translocase</keyword>
<keyword id="KW-0830">Ubiquinone</keyword>
<accession>Q3YSA1</accession>
<organism>
    <name type="scientific">Ehrlichia canis (strain Jake)</name>
    <dbReference type="NCBI Taxonomy" id="269484"/>
    <lineage>
        <taxon>Bacteria</taxon>
        <taxon>Pseudomonadati</taxon>
        <taxon>Pseudomonadota</taxon>
        <taxon>Alphaproteobacteria</taxon>
        <taxon>Rickettsiales</taxon>
        <taxon>Anaplasmataceae</taxon>
        <taxon>Ehrlichia</taxon>
    </lineage>
</organism>
<dbReference type="EC" id="7.1.1.-" evidence="1"/>
<dbReference type="EMBL" id="CP000107">
    <property type="protein sequence ID" value="AAZ68404.1"/>
    <property type="molecule type" value="Genomic_DNA"/>
</dbReference>
<dbReference type="RefSeq" id="WP_011304482.1">
    <property type="nucleotide sequence ID" value="NC_007354.1"/>
</dbReference>
<dbReference type="SMR" id="Q3YSA1"/>
<dbReference type="FunCoup" id="Q3YSA1">
    <property type="interactions" value="243"/>
</dbReference>
<dbReference type="STRING" id="269484.Ecaj_0361"/>
<dbReference type="KEGG" id="ecn:Ecaj_0361"/>
<dbReference type="eggNOG" id="COG1143">
    <property type="taxonomic scope" value="Bacteria"/>
</dbReference>
<dbReference type="HOGENOM" id="CLU_067218_5_1_5"/>
<dbReference type="InParanoid" id="Q3YSA1"/>
<dbReference type="Proteomes" id="UP000000435">
    <property type="component" value="Chromosome"/>
</dbReference>
<dbReference type="GO" id="GO:0005886">
    <property type="term" value="C:plasma membrane"/>
    <property type="evidence" value="ECO:0007669"/>
    <property type="project" value="UniProtKB-SubCell"/>
</dbReference>
<dbReference type="GO" id="GO:0051539">
    <property type="term" value="F:4 iron, 4 sulfur cluster binding"/>
    <property type="evidence" value="ECO:0007669"/>
    <property type="project" value="UniProtKB-KW"/>
</dbReference>
<dbReference type="GO" id="GO:0005506">
    <property type="term" value="F:iron ion binding"/>
    <property type="evidence" value="ECO:0007669"/>
    <property type="project" value="UniProtKB-UniRule"/>
</dbReference>
<dbReference type="GO" id="GO:0050136">
    <property type="term" value="F:NADH:ubiquinone reductase (non-electrogenic) activity"/>
    <property type="evidence" value="ECO:0007669"/>
    <property type="project" value="UniProtKB-UniRule"/>
</dbReference>
<dbReference type="GO" id="GO:0048038">
    <property type="term" value="F:quinone binding"/>
    <property type="evidence" value="ECO:0007669"/>
    <property type="project" value="UniProtKB-KW"/>
</dbReference>
<dbReference type="GO" id="GO:0009060">
    <property type="term" value="P:aerobic respiration"/>
    <property type="evidence" value="ECO:0007669"/>
    <property type="project" value="TreeGrafter"/>
</dbReference>
<dbReference type="FunFam" id="3.30.70.3270:FF:000001">
    <property type="entry name" value="NADH-quinone oxidoreductase subunit I 1"/>
    <property type="match status" value="1"/>
</dbReference>
<dbReference type="Gene3D" id="3.30.70.3270">
    <property type="match status" value="1"/>
</dbReference>
<dbReference type="HAMAP" id="MF_01351">
    <property type="entry name" value="NDH1_NuoI"/>
    <property type="match status" value="1"/>
</dbReference>
<dbReference type="InterPro" id="IPR017896">
    <property type="entry name" value="4Fe4S_Fe-S-bd"/>
</dbReference>
<dbReference type="InterPro" id="IPR017900">
    <property type="entry name" value="4Fe4S_Fe_S_CS"/>
</dbReference>
<dbReference type="InterPro" id="IPR010226">
    <property type="entry name" value="NADH_quinone_OxRdtase_chainI"/>
</dbReference>
<dbReference type="NCBIfam" id="TIGR01971">
    <property type="entry name" value="NuoI"/>
    <property type="match status" value="1"/>
</dbReference>
<dbReference type="NCBIfam" id="NF004538">
    <property type="entry name" value="PRK05888.1-4"/>
    <property type="match status" value="1"/>
</dbReference>
<dbReference type="NCBIfam" id="NF004539">
    <property type="entry name" value="PRK05888.1-5"/>
    <property type="match status" value="1"/>
</dbReference>
<dbReference type="PANTHER" id="PTHR10849:SF20">
    <property type="entry name" value="NADH DEHYDROGENASE [UBIQUINONE] IRON-SULFUR PROTEIN 8, MITOCHONDRIAL"/>
    <property type="match status" value="1"/>
</dbReference>
<dbReference type="PANTHER" id="PTHR10849">
    <property type="entry name" value="NADH DEHYDROGENASE UBIQUINONE IRON-SULFUR PROTEIN 8, MITOCHONDRIAL"/>
    <property type="match status" value="1"/>
</dbReference>
<dbReference type="Pfam" id="PF12838">
    <property type="entry name" value="Fer4_7"/>
    <property type="match status" value="1"/>
</dbReference>
<dbReference type="SUPFAM" id="SSF54862">
    <property type="entry name" value="4Fe-4S ferredoxins"/>
    <property type="match status" value="1"/>
</dbReference>
<dbReference type="PROSITE" id="PS00198">
    <property type="entry name" value="4FE4S_FER_1"/>
    <property type="match status" value="2"/>
</dbReference>
<dbReference type="PROSITE" id="PS51379">
    <property type="entry name" value="4FE4S_FER_2"/>
    <property type="match status" value="2"/>
</dbReference>
<evidence type="ECO:0000255" key="1">
    <source>
        <dbReference type="HAMAP-Rule" id="MF_01351"/>
    </source>
</evidence>